<sequence length="2890" mass="323863">MSKKIPLKNRLRADFTKTPTDLEVPNLLSLQRDSYDSFLYSKDGKESGIEKVFKSIFPIQDEHNRITLEYAGCEFGKSKYTVREAMERGITYSIPLKIKVRLILWEKDTKSGEKNGIKDIKEQSIFIREIPLMTERTSFIINGVERVVVNQLHRSPGVIFKEEESSTSLNKLIYTGQIIPDRGSWLYFEYDSKDVLYARINKRRKVPVTILFRAMDYQKQDIIKMFYPLVKVRYENDKYLIPFASLDANQRMEFDLKDSQGKIILLAGKKLTSKKIKELKENHLEWVEYPMDILINRHLAEPVMVGKEVLLDMLTQLDKNKLEKIHDLGVQEFVIINDLALGHDASIIHSFLADYESLRLLKQTEKIDDENALAAIRIHKVMKPGDPVTTEVAKQFVKKLFFDPERYDLTMVGRMKMNHKLGLHVPDYITTLTHEDIITTVKYLMKIKNNQGKIDDRDHLGNRRIRAVGELLANELHSGLVKMQKTIKDKLTTMSGAFDSLMPHDLVNSKMITSTIMEFFMGGQLSQFMDQTNPLSEVTHKRRLSALGEGGLVKDRVGFEARDVHPTHYGRICPIETPEGQNIGLINTLSTFTRVNDLGFIEAPYKKVVDGKVVGETIYLTAIQEDSHIIAPASTPIDEEGNILGDLIETRVEGEIVLNEKSKVTLMDLSSSMLVGVAASLIPFLEHDDANRALMGTNMQRQAVPLLRSDAPIVGTGIEKIIARDSWGAIKANRAGAVEKIDSKNIYILGEGKEEAYIDAYSLQKNLRTNQNTSFNQVPIVKVGDKVEAGQIIADGPSMDRGELALGKNVRVAFMPWNGYNFEDAIVVSERITKDDIFTSTHIYEKEVDARELKHGVEEFTADIPDVKEEALAHLDESGIVKVGTYVSAGMILVGKTSPKGEIKSTPEERLLRAIFGDKAGHVVNKSLYCPPSLEGTVIDVKVFTKKGYEKDARVLSAYEEEKAKLDMEHFDRLTMLNREELLRVSSLLSQAILEEPFSHNGKDYKEGDQIPKEEIASINRFTLASLVKKYSKEVQNHYEITKNNFLEQKKVLGEEHEEKLSILEKDDILPNGVIKKVKLYIATKRKLKVGDKMAGRHGNKGIVSNIVPVADMPYTADGEPVDIVLNPLGVPSRMNIGQILEMHLGLVGKEFGKQIARMLEDKTKDFAKELRVKMLEIANAINEKDPLTIHALENCSDEELLEYAKDWSKGVKMAIPVFEGISQEKFYKLFELAKIAMDGKMDLYDGRTGEKMRERVNVGYMYMIKLHHLVDEKVHARSTGPYSLVTHQPVGGKALFGGQRFGEMEVWALEAYGAAHTLKEMLTIKSDDIRGRENAYRAIVKGEQVGESEIPETFYVLTKELQSLALDINIFGDDVDEDGAPKPIVIKEDDRPKDFSSFQLTLASPEKIHSWSYGEVKKPETINYRTLKPERDGLFCMKIFGPTKDYECLCGKYKKPRFKDIGTCEKCGVAITHSKVRRFRMGHIELATPVAHIWYVNSLPSRISTLLGVKMKDLERVLYYEAYIVKEPGEAAYDNEGTKLVMKYDILNEEQYQNISRRYEDRGFIAQMGGEAIKDLLEEIDLITLLQSLKEEVKDTNSDAKKKKLIKRLKVVESFLNSGNRPEWMMLTVLPVLPPDLRPLVALDGGKFAVSDVNELYRRVINRNQRLKRLMELGAPEIIVRNEKRMLQEAVDVLFDNGRSTNAVKGANKRPLKSLSEIIKGKQGRFRQNLLGKRVDFSGRSVIVVGPNLKMDECGLPKNMALELFKPHLLSKLEERGYATTLKQAKRMIEQKSNEVWECLQEITEGYPVLLNRAPTLHKQSIQAFHPKLIDGKAIQLHPLVCSAFNADFDGDQMAVHVPLSQEAIAECKVLMLSSMNILLPASGKAVAIPSQDMVLGLYYLSLEKSGVKGEHKLFSSVNEIITAIDTKELDIHAKIRVLDQGNIIATSAGRMIIKSILPDFIPTDLWNRPMKKKDIGVLVDYVHKVGGIGITATFLDNLKTLGFRYATKAGISISMEDIITPKDKQKMVEKAKVEVKKIQQQYDQGLLTDQERYNKIIDTWTEVNDKMSKEMMIAIAKDKEGFNSIYMMADSGARGSAAQIRQLSAMRGLMTKPDGSIIETPIISNFKEGLNVLEYFNSTHGARKGLADTALKTANAGYLTRKLIDVSQNVKVVSDDCGTHEGIEITDIAVGSELIEPLEERIFGRVLLEDVIDPITNEILLYADTLIDEEGAKKVVEAGIKSITIRTPVTCKAPKGVCAKCYGLNLGEGKMSYPGEAVGVVAAQSIGEPGTQLTLRTFHVGGTASRSQDEREIVASKEGFVRFYNLRTYTNKEGKNIIANRRNASILVVEPKIKAPFDGELRIETVYEEVVVSVKNGEQEAKFVLRRSDIVKPSELAGVGGKIEGKVYLPYASGHKVHKGGSIADIIQEGWNVPNRIPYASELLVKDNDPIAQDVYAKEKGTIKYYVLEANHLERTHGIKKGDMVSEKGLFAVVADDNGREAARHYIARGSEILIDDNSEVSANSVISKLTTNTFKTIATWDPYNTPIIADFKGKVSFVDVIAGVTVAEKEDENTGITSLVVNDYIPSGYKPSLFLEGANGEEMRYFLEPKTSIAISDGSSVEQAEVLAKIPKATVKSRDITGGLPRVSELFEARKPKPKDVAILSEVDGIVSFGKPIRNKEHIIVTSKDGRSMDYFVDKGKQILVHADEFVHAGEAMTDGVISSHDILRISGEKELYKYIVSEVQQVYRRQGVSIADKHIEIIVSQMLRQVRILDSGDSKFIEGDLVSKKLFKEENARMIALKGEPAIAEPVLLGITRAAIGSDSIISAASFQETTKVLTEASIAMKKDFLEDLKENVVLGRMIPVGTGMYKNKKIVLRTLEDGPKF</sequence>
<dbReference type="EC" id="2.7.7.6" evidence="2 3"/>
<dbReference type="EMBL" id="CP000241">
    <property type="protein sequence ID" value="ABF85204.1"/>
    <property type="molecule type" value="Genomic_DNA"/>
</dbReference>
<dbReference type="RefSeq" id="WP_000037890.1">
    <property type="nucleotide sequence ID" value="NC_008086.1"/>
</dbReference>
<dbReference type="SMR" id="Q1CS68"/>
<dbReference type="KEGG" id="hpa:HPAG1_1137"/>
<dbReference type="HOGENOM" id="CLU_000524_0_0_7"/>
<dbReference type="GO" id="GO:0000428">
    <property type="term" value="C:DNA-directed RNA polymerase complex"/>
    <property type="evidence" value="ECO:0007669"/>
    <property type="project" value="UniProtKB-KW"/>
</dbReference>
<dbReference type="GO" id="GO:0003677">
    <property type="term" value="F:DNA binding"/>
    <property type="evidence" value="ECO:0007669"/>
    <property type="project" value="UniProtKB-UniRule"/>
</dbReference>
<dbReference type="GO" id="GO:0003899">
    <property type="term" value="F:DNA-directed RNA polymerase activity"/>
    <property type="evidence" value="ECO:0007669"/>
    <property type="project" value="UniProtKB-UniRule"/>
</dbReference>
<dbReference type="GO" id="GO:0000287">
    <property type="term" value="F:magnesium ion binding"/>
    <property type="evidence" value="ECO:0007669"/>
    <property type="project" value="UniProtKB-UniRule"/>
</dbReference>
<dbReference type="GO" id="GO:0032549">
    <property type="term" value="F:ribonucleoside binding"/>
    <property type="evidence" value="ECO:0007669"/>
    <property type="project" value="InterPro"/>
</dbReference>
<dbReference type="GO" id="GO:0008270">
    <property type="term" value="F:zinc ion binding"/>
    <property type="evidence" value="ECO:0007669"/>
    <property type="project" value="UniProtKB-UniRule"/>
</dbReference>
<dbReference type="GO" id="GO:0006351">
    <property type="term" value="P:DNA-templated transcription"/>
    <property type="evidence" value="ECO:0007669"/>
    <property type="project" value="UniProtKB-UniRule"/>
</dbReference>
<dbReference type="CDD" id="cd00653">
    <property type="entry name" value="RNA_pol_B_RPB2"/>
    <property type="match status" value="1"/>
</dbReference>
<dbReference type="CDD" id="cd02655">
    <property type="entry name" value="RNAP_beta'_C"/>
    <property type="match status" value="1"/>
</dbReference>
<dbReference type="CDD" id="cd01609">
    <property type="entry name" value="RNAP_beta'_N"/>
    <property type="match status" value="1"/>
</dbReference>
<dbReference type="FunFam" id="1.10.132.30:FF:000003">
    <property type="entry name" value="DNA-directed RNA polymerase subunit beta"/>
    <property type="match status" value="1"/>
</dbReference>
<dbReference type="Gene3D" id="1.10.132.30">
    <property type="match status" value="1"/>
</dbReference>
<dbReference type="Gene3D" id="1.10.150.390">
    <property type="match status" value="1"/>
</dbReference>
<dbReference type="Gene3D" id="1.10.1790.20">
    <property type="match status" value="1"/>
</dbReference>
<dbReference type="Gene3D" id="1.10.40.90">
    <property type="match status" value="1"/>
</dbReference>
<dbReference type="Gene3D" id="2.40.40.20">
    <property type="match status" value="1"/>
</dbReference>
<dbReference type="Gene3D" id="2.40.50.100">
    <property type="match status" value="4"/>
</dbReference>
<dbReference type="Gene3D" id="2.40.50.150">
    <property type="match status" value="1"/>
</dbReference>
<dbReference type="Gene3D" id="3.90.1100.10">
    <property type="match status" value="2"/>
</dbReference>
<dbReference type="Gene3D" id="2.30.150.10">
    <property type="entry name" value="DNA-directed RNA polymerase, beta subunit, external 1 domain"/>
    <property type="match status" value="1"/>
</dbReference>
<dbReference type="Gene3D" id="2.40.270.10">
    <property type="entry name" value="DNA-directed RNA polymerase, subunit 2, domain 6"/>
    <property type="match status" value="2"/>
</dbReference>
<dbReference type="Gene3D" id="3.90.1800.10">
    <property type="entry name" value="RNA polymerase alpha subunit dimerisation domain"/>
    <property type="match status" value="1"/>
</dbReference>
<dbReference type="Gene3D" id="4.10.860.120">
    <property type="entry name" value="RNA polymerase II, clamp domain"/>
    <property type="match status" value="1"/>
</dbReference>
<dbReference type="Gene3D" id="1.10.274.100">
    <property type="entry name" value="RNA polymerase Rpb1, domain 3"/>
    <property type="match status" value="2"/>
</dbReference>
<dbReference type="Gene3D" id="3.90.1110.10">
    <property type="entry name" value="RNA polymerase Rpb2, domain 2"/>
    <property type="match status" value="2"/>
</dbReference>
<dbReference type="HAMAP" id="MF_01321">
    <property type="entry name" value="RNApol_bact_RpoB"/>
    <property type="match status" value="1"/>
</dbReference>
<dbReference type="HAMAP" id="MF_01322">
    <property type="entry name" value="RNApol_bact_RpoC"/>
    <property type="match status" value="1"/>
</dbReference>
<dbReference type="InterPro" id="IPR042107">
    <property type="entry name" value="DNA-dir_RNA_pol_bsu_ext_1_sf"/>
</dbReference>
<dbReference type="InterPro" id="IPR019462">
    <property type="entry name" value="DNA-dir_RNA_pol_bsu_external_1"/>
</dbReference>
<dbReference type="InterPro" id="IPR015712">
    <property type="entry name" value="DNA-dir_RNA_pol_su2"/>
</dbReference>
<dbReference type="InterPro" id="IPR007120">
    <property type="entry name" value="DNA-dir_RNAP_su2_dom"/>
</dbReference>
<dbReference type="InterPro" id="IPR037033">
    <property type="entry name" value="DNA-dir_RNAP_su2_hyb_sf"/>
</dbReference>
<dbReference type="InterPro" id="IPR045867">
    <property type="entry name" value="DNA-dir_RpoC_beta_prime"/>
</dbReference>
<dbReference type="InterPro" id="IPR012754">
    <property type="entry name" value="DNA-dir_RpoC_beta_prime_bact"/>
</dbReference>
<dbReference type="InterPro" id="IPR000722">
    <property type="entry name" value="RNA_pol_asu"/>
</dbReference>
<dbReference type="InterPro" id="IPR010243">
    <property type="entry name" value="RNA_pol_bsu_bac"/>
</dbReference>
<dbReference type="InterPro" id="IPR007121">
    <property type="entry name" value="RNA_pol_bsu_CS"/>
</dbReference>
<dbReference type="InterPro" id="IPR007644">
    <property type="entry name" value="RNA_pol_bsu_protrusion"/>
</dbReference>
<dbReference type="InterPro" id="IPR006592">
    <property type="entry name" value="RNA_pol_N"/>
</dbReference>
<dbReference type="InterPro" id="IPR007080">
    <property type="entry name" value="RNA_pol_Rpb1_1"/>
</dbReference>
<dbReference type="InterPro" id="IPR007066">
    <property type="entry name" value="RNA_pol_Rpb1_3"/>
</dbReference>
<dbReference type="InterPro" id="IPR042102">
    <property type="entry name" value="RNA_pol_Rpb1_3_sf"/>
</dbReference>
<dbReference type="InterPro" id="IPR007083">
    <property type="entry name" value="RNA_pol_Rpb1_4"/>
</dbReference>
<dbReference type="InterPro" id="IPR007081">
    <property type="entry name" value="RNA_pol_Rpb1_5"/>
</dbReference>
<dbReference type="InterPro" id="IPR044893">
    <property type="entry name" value="RNA_pol_Rpb1_clamp_domain"/>
</dbReference>
<dbReference type="InterPro" id="IPR007642">
    <property type="entry name" value="RNA_pol_Rpb2_2"/>
</dbReference>
<dbReference type="InterPro" id="IPR037034">
    <property type="entry name" value="RNA_pol_Rpb2_2_sf"/>
</dbReference>
<dbReference type="InterPro" id="IPR007645">
    <property type="entry name" value="RNA_pol_Rpb2_3"/>
</dbReference>
<dbReference type="InterPro" id="IPR007641">
    <property type="entry name" value="RNA_pol_Rpb2_7"/>
</dbReference>
<dbReference type="InterPro" id="IPR014724">
    <property type="entry name" value="RNA_pol_RPB2_OB-fold"/>
</dbReference>
<dbReference type="InterPro" id="IPR038120">
    <property type="entry name" value="Rpb1_funnel_sf"/>
</dbReference>
<dbReference type="NCBIfam" id="NF001616">
    <property type="entry name" value="PRK00405.1"/>
    <property type="match status" value="1"/>
</dbReference>
<dbReference type="NCBIfam" id="NF007172">
    <property type="entry name" value="PRK09603.1"/>
    <property type="match status" value="1"/>
</dbReference>
<dbReference type="NCBIfam" id="TIGR02013">
    <property type="entry name" value="rpoB"/>
    <property type="match status" value="1"/>
</dbReference>
<dbReference type="NCBIfam" id="TIGR02386">
    <property type="entry name" value="rpoC_TIGR"/>
    <property type="match status" value="1"/>
</dbReference>
<dbReference type="PANTHER" id="PTHR19376">
    <property type="entry name" value="DNA-DIRECTED RNA POLYMERASE"/>
    <property type="match status" value="1"/>
</dbReference>
<dbReference type="PANTHER" id="PTHR19376:SF54">
    <property type="entry name" value="DNA-DIRECTED RNA POLYMERASE SUBUNIT BETA"/>
    <property type="match status" value="1"/>
</dbReference>
<dbReference type="Pfam" id="PF04997">
    <property type="entry name" value="RNA_pol_Rpb1_1"/>
    <property type="match status" value="1"/>
</dbReference>
<dbReference type="Pfam" id="PF00623">
    <property type="entry name" value="RNA_pol_Rpb1_2"/>
    <property type="match status" value="1"/>
</dbReference>
<dbReference type="Pfam" id="PF04983">
    <property type="entry name" value="RNA_pol_Rpb1_3"/>
    <property type="match status" value="1"/>
</dbReference>
<dbReference type="Pfam" id="PF05000">
    <property type="entry name" value="RNA_pol_Rpb1_4"/>
    <property type="match status" value="1"/>
</dbReference>
<dbReference type="Pfam" id="PF04998">
    <property type="entry name" value="RNA_pol_Rpb1_5"/>
    <property type="match status" value="1"/>
</dbReference>
<dbReference type="Pfam" id="PF04563">
    <property type="entry name" value="RNA_pol_Rpb2_1"/>
    <property type="match status" value="1"/>
</dbReference>
<dbReference type="Pfam" id="PF04561">
    <property type="entry name" value="RNA_pol_Rpb2_2"/>
    <property type="match status" value="2"/>
</dbReference>
<dbReference type="Pfam" id="PF04565">
    <property type="entry name" value="RNA_pol_Rpb2_3"/>
    <property type="match status" value="1"/>
</dbReference>
<dbReference type="Pfam" id="PF10385">
    <property type="entry name" value="RNA_pol_Rpb2_45"/>
    <property type="match status" value="1"/>
</dbReference>
<dbReference type="Pfam" id="PF00562">
    <property type="entry name" value="RNA_pol_Rpb2_6"/>
    <property type="match status" value="1"/>
</dbReference>
<dbReference type="Pfam" id="PF04560">
    <property type="entry name" value="RNA_pol_Rpb2_7"/>
    <property type="match status" value="1"/>
</dbReference>
<dbReference type="SMART" id="SM00663">
    <property type="entry name" value="RPOLA_N"/>
    <property type="match status" value="1"/>
</dbReference>
<dbReference type="SUPFAM" id="SSF64484">
    <property type="entry name" value="beta and beta-prime subunits of DNA dependent RNA-polymerase"/>
    <property type="match status" value="2"/>
</dbReference>
<dbReference type="PROSITE" id="PS01166">
    <property type="entry name" value="RNA_POL_BETA"/>
    <property type="match status" value="1"/>
</dbReference>
<accession>Q1CS68</accession>
<organism>
    <name type="scientific">Helicobacter pylori (strain HPAG1)</name>
    <dbReference type="NCBI Taxonomy" id="357544"/>
    <lineage>
        <taxon>Bacteria</taxon>
        <taxon>Pseudomonadati</taxon>
        <taxon>Campylobacterota</taxon>
        <taxon>Epsilonproteobacteria</taxon>
        <taxon>Campylobacterales</taxon>
        <taxon>Helicobacteraceae</taxon>
        <taxon>Helicobacter</taxon>
    </lineage>
</organism>
<comment type="function">
    <text evidence="2 3">DNA-dependent RNA polymerase catalyzes the transcription of DNA into RNA using the four ribonucleoside triphosphates as substrates.</text>
</comment>
<comment type="catalytic activity">
    <reaction evidence="2 3">
        <text>RNA(n) + a ribonucleoside 5'-triphosphate = RNA(n+1) + diphosphate</text>
        <dbReference type="Rhea" id="RHEA:21248"/>
        <dbReference type="Rhea" id="RHEA-COMP:14527"/>
        <dbReference type="Rhea" id="RHEA-COMP:17342"/>
        <dbReference type="ChEBI" id="CHEBI:33019"/>
        <dbReference type="ChEBI" id="CHEBI:61557"/>
        <dbReference type="ChEBI" id="CHEBI:140395"/>
        <dbReference type="EC" id="2.7.7.6"/>
    </reaction>
</comment>
<comment type="cofactor">
    <cofactor evidence="3">
        <name>Mg(2+)</name>
        <dbReference type="ChEBI" id="CHEBI:18420"/>
    </cofactor>
    <text evidence="3">Binds 1 Mg(2+) ion per subunit.</text>
</comment>
<comment type="cofactor">
    <cofactor evidence="3">
        <name>Zn(2+)</name>
        <dbReference type="ChEBI" id="CHEBI:29105"/>
    </cofactor>
    <text evidence="3">Binds 2 Zn(2+) ions per subunit.</text>
</comment>
<comment type="subunit">
    <text evidence="2 3">The RNAP catalytic core consists of 2 alpha, 1 beta/beta' and 1 omega subunit. When a sigma factor is associated with the core the holoenzyme is formed, which can initiate transcription.</text>
</comment>
<comment type="miscellaneous">
    <text evidence="1">Fusion of rpoB and rpoC occurs naturally in Helicobacter species and at least some Wolbachia; the protein has been artificially split in two in H.pylori. The split protein seems to function normally.</text>
</comment>
<comment type="similarity">
    <text evidence="4">In the N-terminal section; belongs to the RNA polymerase beta chain family.</text>
</comment>
<comment type="similarity">
    <text evidence="4">In the C-terminal section; belongs to the RNA polymerase beta' chain family.</text>
</comment>
<proteinExistence type="inferred from homology"/>
<name>RPOBC_HELPH</name>
<reference key="1">
    <citation type="journal article" date="2006" name="Proc. Natl. Acad. Sci. U.S.A.">
        <title>The complete genome sequence of a chronic atrophic gastritis Helicobacter pylori strain: evolution during disease progression.</title>
        <authorList>
            <person name="Oh J.D."/>
            <person name="Kling-Baeckhed H."/>
            <person name="Giannakis M."/>
            <person name="Xu J."/>
            <person name="Fulton R.S."/>
            <person name="Fulton L.A."/>
            <person name="Cordum H.S."/>
            <person name="Wang C."/>
            <person name="Elliott G."/>
            <person name="Edwards J."/>
            <person name="Mardis E.R."/>
            <person name="Engstrand L.G."/>
            <person name="Gordon J.I."/>
        </authorList>
    </citation>
    <scope>NUCLEOTIDE SEQUENCE [LARGE SCALE GENOMIC DNA]</scope>
    <source>
        <strain>HPAG1</strain>
    </source>
</reference>
<gene>
    <name type="primary">rpoBC</name>
    <name type="ordered locus">HPAG1_1137</name>
</gene>
<keyword id="KW-0240">DNA-directed RNA polymerase</keyword>
<keyword id="KW-0460">Magnesium</keyword>
<keyword id="KW-0479">Metal-binding</keyword>
<keyword id="KW-0548">Nucleotidyltransferase</keyword>
<keyword id="KW-0804">Transcription</keyword>
<keyword id="KW-0808">Transferase</keyword>
<keyword id="KW-0862">Zinc</keyword>
<evidence type="ECO:0000250" key="1">
    <source>
        <dbReference type="UniProtKB" id="O25806"/>
    </source>
</evidence>
<evidence type="ECO:0000255" key="2">
    <source>
        <dbReference type="HAMAP-Rule" id="MF_01321"/>
    </source>
</evidence>
<evidence type="ECO:0000255" key="3">
    <source>
        <dbReference type="HAMAP-Rule" id="MF_01322"/>
    </source>
</evidence>
<evidence type="ECO:0000305" key="4"/>
<feature type="chain" id="PRO_0000300130" description="Bifunctional DNA-directed RNA polymerase subunit beta-beta'">
    <location>
        <begin position="1"/>
        <end position="2890"/>
    </location>
</feature>
<feature type="region of interest" description="DNA-directed RNA polymerase subunit beta">
    <location>
        <begin position="1"/>
        <end position="1377"/>
    </location>
</feature>
<feature type="region of interest" description="DNA-directed RNA polymerase subunit beta'">
    <location>
        <begin position="1384"/>
        <end position="2890"/>
    </location>
</feature>
<feature type="binding site" evidence="3">
    <location>
        <position position="1449"/>
    </location>
    <ligand>
        <name>Zn(2+)</name>
        <dbReference type="ChEBI" id="CHEBI:29105"/>
        <label>1</label>
    </ligand>
</feature>
<feature type="binding site" evidence="3">
    <location>
        <position position="1451"/>
    </location>
    <ligand>
        <name>Zn(2+)</name>
        <dbReference type="ChEBI" id="CHEBI:29105"/>
        <label>1</label>
    </ligand>
</feature>
<feature type="binding site" evidence="3">
    <location>
        <position position="1465"/>
    </location>
    <ligand>
        <name>Zn(2+)</name>
        <dbReference type="ChEBI" id="CHEBI:29105"/>
        <label>1</label>
    </ligand>
</feature>
<feature type="binding site" evidence="3">
    <location>
        <position position="1468"/>
    </location>
    <ligand>
        <name>Zn(2+)</name>
        <dbReference type="ChEBI" id="CHEBI:29105"/>
        <label>1</label>
    </ligand>
</feature>
<feature type="binding site" evidence="3">
    <location>
        <position position="1849"/>
    </location>
    <ligand>
        <name>Mg(2+)</name>
        <dbReference type="ChEBI" id="CHEBI:18420"/>
    </ligand>
</feature>
<feature type="binding site" evidence="3">
    <location>
        <position position="1851"/>
    </location>
    <ligand>
        <name>Mg(2+)</name>
        <dbReference type="ChEBI" id="CHEBI:18420"/>
    </ligand>
</feature>
<feature type="binding site" evidence="3">
    <location>
        <position position="1853"/>
    </location>
    <ligand>
        <name>Mg(2+)</name>
        <dbReference type="ChEBI" id="CHEBI:18420"/>
    </ligand>
</feature>
<feature type="binding site" evidence="3">
    <location>
        <position position="2179"/>
    </location>
    <ligand>
        <name>Zn(2+)</name>
        <dbReference type="ChEBI" id="CHEBI:29105"/>
        <label>2</label>
    </ligand>
</feature>
<feature type="binding site" evidence="3">
    <location>
        <position position="2253"/>
    </location>
    <ligand>
        <name>Zn(2+)</name>
        <dbReference type="ChEBI" id="CHEBI:29105"/>
        <label>2</label>
    </ligand>
</feature>
<feature type="binding site" evidence="3">
    <location>
        <position position="2260"/>
    </location>
    <ligand>
        <name>Zn(2+)</name>
        <dbReference type="ChEBI" id="CHEBI:29105"/>
        <label>2</label>
    </ligand>
</feature>
<feature type="binding site" evidence="3">
    <location>
        <position position="2263"/>
    </location>
    <ligand>
        <name>Zn(2+)</name>
        <dbReference type="ChEBI" id="CHEBI:29105"/>
        <label>2</label>
    </ligand>
</feature>
<protein>
    <recommendedName>
        <fullName>Bifunctional DNA-directed RNA polymerase subunit beta-beta'</fullName>
        <ecNumber evidence="2 3">2.7.7.6</ecNumber>
    </recommendedName>
    <domain>
        <recommendedName>
            <fullName evidence="2">DNA-directed RNA polymerase subunit beta</fullName>
        </recommendedName>
        <alternativeName>
            <fullName evidence="2">RNA polymerase subunit beta</fullName>
        </alternativeName>
        <alternativeName>
            <fullName evidence="2">Transcriptase subunit beta</fullName>
        </alternativeName>
    </domain>
    <domain>
        <recommendedName>
            <fullName evidence="3">DNA-directed RNA polymerase subunit beta'</fullName>
        </recommendedName>
        <alternativeName>
            <fullName evidence="3">RNA polymerase beta'</fullName>
        </alternativeName>
        <alternativeName>
            <fullName evidence="3">Transcriptase subunit beta'</fullName>
        </alternativeName>
    </domain>
</protein>